<accession>Q2T0G3</accession>
<proteinExistence type="inferred from homology"/>
<gene>
    <name evidence="1" type="primary">rpmB</name>
    <name type="ordered locus">BTH_I0780</name>
</gene>
<dbReference type="EMBL" id="CP000086">
    <property type="protein sequence ID" value="ABC38858.1"/>
    <property type="molecule type" value="Genomic_DNA"/>
</dbReference>
<dbReference type="RefSeq" id="WP_004186391.1">
    <property type="nucleotide sequence ID" value="NZ_CP008785.1"/>
</dbReference>
<dbReference type="SMR" id="Q2T0G3"/>
<dbReference type="GeneID" id="98107656"/>
<dbReference type="KEGG" id="bte:BTH_I0780"/>
<dbReference type="HOGENOM" id="CLU_064548_3_1_4"/>
<dbReference type="Proteomes" id="UP000001930">
    <property type="component" value="Chromosome I"/>
</dbReference>
<dbReference type="GO" id="GO:0022625">
    <property type="term" value="C:cytosolic large ribosomal subunit"/>
    <property type="evidence" value="ECO:0007669"/>
    <property type="project" value="TreeGrafter"/>
</dbReference>
<dbReference type="GO" id="GO:0003735">
    <property type="term" value="F:structural constituent of ribosome"/>
    <property type="evidence" value="ECO:0007669"/>
    <property type="project" value="InterPro"/>
</dbReference>
<dbReference type="GO" id="GO:0006412">
    <property type="term" value="P:translation"/>
    <property type="evidence" value="ECO:0007669"/>
    <property type="project" value="UniProtKB-UniRule"/>
</dbReference>
<dbReference type="FunFam" id="2.30.170.40:FF:000001">
    <property type="entry name" value="50S ribosomal protein L28"/>
    <property type="match status" value="1"/>
</dbReference>
<dbReference type="Gene3D" id="2.30.170.40">
    <property type="entry name" value="Ribosomal protein L28/L24"/>
    <property type="match status" value="1"/>
</dbReference>
<dbReference type="HAMAP" id="MF_00373">
    <property type="entry name" value="Ribosomal_bL28"/>
    <property type="match status" value="1"/>
</dbReference>
<dbReference type="InterPro" id="IPR026569">
    <property type="entry name" value="Ribosomal_bL28"/>
</dbReference>
<dbReference type="InterPro" id="IPR034704">
    <property type="entry name" value="Ribosomal_bL28/bL31-like_sf"/>
</dbReference>
<dbReference type="InterPro" id="IPR001383">
    <property type="entry name" value="Ribosomal_bL28_bact-type"/>
</dbReference>
<dbReference type="InterPro" id="IPR037147">
    <property type="entry name" value="Ribosomal_bL28_sf"/>
</dbReference>
<dbReference type="NCBIfam" id="TIGR00009">
    <property type="entry name" value="L28"/>
    <property type="match status" value="1"/>
</dbReference>
<dbReference type="PANTHER" id="PTHR13528">
    <property type="entry name" value="39S RIBOSOMAL PROTEIN L28, MITOCHONDRIAL"/>
    <property type="match status" value="1"/>
</dbReference>
<dbReference type="PANTHER" id="PTHR13528:SF2">
    <property type="entry name" value="LARGE RIBOSOMAL SUBUNIT PROTEIN BL28M"/>
    <property type="match status" value="1"/>
</dbReference>
<dbReference type="Pfam" id="PF00830">
    <property type="entry name" value="Ribosomal_L28"/>
    <property type="match status" value="1"/>
</dbReference>
<dbReference type="SUPFAM" id="SSF143800">
    <property type="entry name" value="L28p-like"/>
    <property type="match status" value="1"/>
</dbReference>
<sequence>MARVCQVTGKAPMSGNNVSHANNKTKRRFLPNLQNRRFWVESENRWVRLRVSNAGLRLIDKNGIDSVLADLRARGEA</sequence>
<keyword id="KW-0687">Ribonucleoprotein</keyword>
<keyword id="KW-0689">Ribosomal protein</keyword>
<feature type="chain" id="PRO_1000007194" description="Large ribosomal subunit protein bL28">
    <location>
        <begin position="1"/>
        <end position="77"/>
    </location>
</feature>
<feature type="region of interest" description="Disordered" evidence="2">
    <location>
        <begin position="1"/>
        <end position="25"/>
    </location>
</feature>
<evidence type="ECO:0000255" key="1">
    <source>
        <dbReference type="HAMAP-Rule" id="MF_00373"/>
    </source>
</evidence>
<evidence type="ECO:0000256" key="2">
    <source>
        <dbReference type="SAM" id="MobiDB-lite"/>
    </source>
</evidence>
<evidence type="ECO:0000305" key="3"/>
<comment type="similarity">
    <text evidence="1">Belongs to the bacterial ribosomal protein bL28 family.</text>
</comment>
<organism>
    <name type="scientific">Burkholderia thailandensis (strain ATCC 700388 / DSM 13276 / CCUG 48851 / CIP 106301 / E264)</name>
    <dbReference type="NCBI Taxonomy" id="271848"/>
    <lineage>
        <taxon>Bacteria</taxon>
        <taxon>Pseudomonadati</taxon>
        <taxon>Pseudomonadota</taxon>
        <taxon>Betaproteobacteria</taxon>
        <taxon>Burkholderiales</taxon>
        <taxon>Burkholderiaceae</taxon>
        <taxon>Burkholderia</taxon>
        <taxon>pseudomallei group</taxon>
    </lineage>
</organism>
<name>RL28_BURTA</name>
<reference key="1">
    <citation type="journal article" date="2005" name="BMC Genomics">
        <title>Bacterial genome adaptation to niches: divergence of the potential virulence genes in three Burkholderia species of different survival strategies.</title>
        <authorList>
            <person name="Kim H.S."/>
            <person name="Schell M.A."/>
            <person name="Yu Y."/>
            <person name="Ulrich R.L."/>
            <person name="Sarria S.H."/>
            <person name="Nierman W.C."/>
            <person name="DeShazer D."/>
        </authorList>
    </citation>
    <scope>NUCLEOTIDE SEQUENCE [LARGE SCALE GENOMIC DNA]</scope>
    <source>
        <strain>ATCC 700388 / DSM 13276 / CCUG 48851 / CIP 106301 / E264</strain>
    </source>
</reference>
<protein>
    <recommendedName>
        <fullName evidence="1">Large ribosomal subunit protein bL28</fullName>
    </recommendedName>
    <alternativeName>
        <fullName evidence="3">50S ribosomal protein L28</fullName>
    </alternativeName>
</protein>